<organism>
    <name type="scientific">Salmonella paratyphi A (strain ATCC 9150 / SARB42)</name>
    <dbReference type="NCBI Taxonomy" id="295319"/>
    <lineage>
        <taxon>Bacteria</taxon>
        <taxon>Pseudomonadati</taxon>
        <taxon>Pseudomonadota</taxon>
        <taxon>Gammaproteobacteria</taxon>
        <taxon>Enterobacterales</taxon>
        <taxon>Enterobacteriaceae</taxon>
        <taxon>Salmonella</taxon>
    </lineage>
</organism>
<reference key="1">
    <citation type="journal article" date="2004" name="Nat. Genet.">
        <title>Comparison of genome degradation in Paratyphi A and Typhi, human-restricted serovars of Salmonella enterica that cause typhoid.</title>
        <authorList>
            <person name="McClelland M."/>
            <person name="Sanderson K.E."/>
            <person name="Clifton S.W."/>
            <person name="Latreille P."/>
            <person name="Porwollik S."/>
            <person name="Sabo A."/>
            <person name="Meyer R."/>
            <person name="Bieri T."/>
            <person name="Ozersky P."/>
            <person name="McLellan M."/>
            <person name="Harkins C.R."/>
            <person name="Wang C."/>
            <person name="Nguyen C."/>
            <person name="Berghoff A."/>
            <person name="Elliott G."/>
            <person name="Kohlberg S."/>
            <person name="Strong C."/>
            <person name="Du F."/>
            <person name="Carter J."/>
            <person name="Kremizki C."/>
            <person name="Layman D."/>
            <person name="Leonard S."/>
            <person name="Sun H."/>
            <person name="Fulton L."/>
            <person name="Nash W."/>
            <person name="Miner T."/>
            <person name="Minx P."/>
            <person name="Delehaunty K."/>
            <person name="Fronick C."/>
            <person name="Magrini V."/>
            <person name="Nhan M."/>
            <person name="Warren W."/>
            <person name="Florea L."/>
            <person name="Spieth J."/>
            <person name="Wilson R.K."/>
        </authorList>
    </citation>
    <scope>NUCLEOTIDE SEQUENCE [LARGE SCALE GENOMIC DNA]</scope>
    <source>
        <strain>ATCC 9150 / SARB42</strain>
    </source>
</reference>
<keyword id="KW-0687">Ribonucleoprotein</keyword>
<keyword id="KW-0689">Ribosomal protein</keyword>
<comment type="similarity">
    <text evidence="1">Belongs to the bacterial ribosomal protein bL35 family.</text>
</comment>
<name>RL35_SALPA</name>
<evidence type="ECO:0000255" key="1">
    <source>
        <dbReference type="HAMAP-Rule" id="MF_00514"/>
    </source>
</evidence>
<evidence type="ECO:0000256" key="2">
    <source>
        <dbReference type="SAM" id="MobiDB-lite"/>
    </source>
</evidence>
<evidence type="ECO:0000305" key="3"/>
<gene>
    <name evidence="1" type="primary">rpmI</name>
    <name type="ordered locus">SPA1508</name>
</gene>
<protein>
    <recommendedName>
        <fullName evidence="1">Large ribosomal subunit protein bL35</fullName>
    </recommendedName>
    <alternativeName>
        <fullName evidence="3">50S ribosomal protein L35</fullName>
    </alternativeName>
</protein>
<feature type="chain" id="PRO_0000258750" description="Large ribosomal subunit protein bL35">
    <location>
        <begin position="1"/>
        <end position="65"/>
    </location>
</feature>
<feature type="region of interest" description="Disordered" evidence="2">
    <location>
        <begin position="1"/>
        <end position="22"/>
    </location>
</feature>
<feature type="compositionally biased region" description="Basic residues" evidence="2">
    <location>
        <begin position="10"/>
        <end position="22"/>
    </location>
</feature>
<dbReference type="EMBL" id="CP000026">
    <property type="protein sequence ID" value="AAV77441.1"/>
    <property type="molecule type" value="Genomic_DNA"/>
</dbReference>
<dbReference type="RefSeq" id="WP_001124225.1">
    <property type="nucleotide sequence ID" value="NC_006511.1"/>
</dbReference>
<dbReference type="SMR" id="Q5PH90"/>
<dbReference type="GeneID" id="97601348"/>
<dbReference type="KEGG" id="spt:SPA1508"/>
<dbReference type="HOGENOM" id="CLU_169643_1_1_6"/>
<dbReference type="Proteomes" id="UP000008185">
    <property type="component" value="Chromosome"/>
</dbReference>
<dbReference type="GO" id="GO:0022625">
    <property type="term" value="C:cytosolic large ribosomal subunit"/>
    <property type="evidence" value="ECO:0007669"/>
    <property type="project" value="TreeGrafter"/>
</dbReference>
<dbReference type="GO" id="GO:0003735">
    <property type="term" value="F:structural constituent of ribosome"/>
    <property type="evidence" value="ECO:0007669"/>
    <property type="project" value="InterPro"/>
</dbReference>
<dbReference type="GO" id="GO:0006412">
    <property type="term" value="P:translation"/>
    <property type="evidence" value="ECO:0007669"/>
    <property type="project" value="UniProtKB-UniRule"/>
</dbReference>
<dbReference type="FunFam" id="4.10.410.60:FF:000001">
    <property type="entry name" value="50S ribosomal protein L35"/>
    <property type="match status" value="1"/>
</dbReference>
<dbReference type="Gene3D" id="4.10.410.60">
    <property type="match status" value="1"/>
</dbReference>
<dbReference type="HAMAP" id="MF_00514">
    <property type="entry name" value="Ribosomal_bL35"/>
    <property type="match status" value="1"/>
</dbReference>
<dbReference type="InterPro" id="IPR001706">
    <property type="entry name" value="Ribosomal_bL35"/>
</dbReference>
<dbReference type="InterPro" id="IPR021137">
    <property type="entry name" value="Ribosomal_bL35-like"/>
</dbReference>
<dbReference type="InterPro" id="IPR018265">
    <property type="entry name" value="Ribosomal_bL35_CS"/>
</dbReference>
<dbReference type="InterPro" id="IPR037229">
    <property type="entry name" value="Ribosomal_bL35_sf"/>
</dbReference>
<dbReference type="NCBIfam" id="TIGR00001">
    <property type="entry name" value="rpmI_bact"/>
    <property type="match status" value="1"/>
</dbReference>
<dbReference type="PANTHER" id="PTHR33343">
    <property type="entry name" value="54S RIBOSOMAL PROTEIN BL35M"/>
    <property type="match status" value="1"/>
</dbReference>
<dbReference type="PANTHER" id="PTHR33343:SF1">
    <property type="entry name" value="LARGE RIBOSOMAL SUBUNIT PROTEIN BL35M"/>
    <property type="match status" value="1"/>
</dbReference>
<dbReference type="Pfam" id="PF01632">
    <property type="entry name" value="Ribosomal_L35p"/>
    <property type="match status" value="1"/>
</dbReference>
<dbReference type="PRINTS" id="PR00064">
    <property type="entry name" value="RIBOSOMALL35"/>
</dbReference>
<dbReference type="SUPFAM" id="SSF143034">
    <property type="entry name" value="L35p-like"/>
    <property type="match status" value="1"/>
</dbReference>
<dbReference type="PROSITE" id="PS00936">
    <property type="entry name" value="RIBOSOMAL_L35"/>
    <property type="match status" value="1"/>
</dbReference>
<accession>Q5PH90</accession>
<sequence length="65" mass="7289">MPKIKTVRGAAKRFKKTGKGGFKHKHANLRHILTKKATKRKRHLRPKAMVSKGDLGLVIACLPYA</sequence>
<proteinExistence type="inferred from homology"/>